<name>CFD1_CRYNB</name>
<evidence type="ECO:0000255" key="1">
    <source>
        <dbReference type="HAMAP-Rule" id="MF_03039"/>
    </source>
</evidence>
<dbReference type="EMBL" id="AAEY01000001">
    <property type="protein sequence ID" value="EAL23420.1"/>
    <property type="molecule type" value="Genomic_DNA"/>
</dbReference>
<dbReference type="RefSeq" id="XP_778067.1">
    <property type="nucleotide sequence ID" value="XM_772974.1"/>
</dbReference>
<dbReference type="SMR" id="P0CO91"/>
<dbReference type="EnsemblFungi" id="AAW40670">
    <property type="protein sequence ID" value="AAW40670"/>
    <property type="gene ID" value="CNA00720"/>
</dbReference>
<dbReference type="GeneID" id="4933321"/>
<dbReference type="KEGG" id="cnb:CNBA0700"/>
<dbReference type="VEuPathDB" id="FungiDB:CNBA0700"/>
<dbReference type="HOGENOM" id="CLU_024839_0_1_1"/>
<dbReference type="OrthoDB" id="7362at5206"/>
<dbReference type="GO" id="GO:1904564">
    <property type="term" value="C:cytosolic [4Fe-4S] assembly scaffold complex"/>
    <property type="evidence" value="ECO:0007669"/>
    <property type="project" value="EnsemblFungi"/>
</dbReference>
<dbReference type="GO" id="GO:0051539">
    <property type="term" value="F:4 iron, 4 sulfur cluster binding"/>
    <property type="evidence" value="ECO:0007669"/>
    <property type="project" value="UniProtKB-UniRule"/>
</dbReference>
<dbReference type="GO" id="GO:0005524">
    <property type="term" value="F:ATP binding"/>
    <property type="evidence" value="ECO:0007669"/>
    <property type="project" value="UniProtKB-KW"/>
</dbReference>
<dbReference type="GO" id="GO:0016887">
    <property type="term" value="F:ATP hydrolysis activity"/>
    <property type="evidence" value="ECO:0007669"/>
    <property type="project" value="EnsemblFungi"/>
</dbReference>
<dbReference type="GO" id="GO:0140663">
    <property type="term" value="F:ATP-dependent FeS chaperone activity"/>
    <property type="evidence" value="ECO:0007669"/>
    <property type="project" value="InterPro"/>
</dbReference>
<dbReference type="GO" id="GO:0046872">
    <property type="term" value="F:metal ion binding"/>
    <property type="evidence" value="ECO:0007669"/>
    <property type="project" value="UniProtKB-KW"/>
</dbReference>
<dbReference type="GO" id="GO:0016226">
    <property type="term" value="P:iron-sulfur cluster assembly"/>
    <property type="evidence" value="ECO:0007669"/>
    <property type="project" value="UniProtKB-UniRule"/>
</dbReference>
<dbReference type="GO" id="GO:0002098">
    <property type="term" value="P:tRNA wobble uridine modification"/>
    <property type="evidence" value="ECO:0007669"/>
    <property type="project" value="EnsemblFungi"/>
</dbReference>
<dbReference type="CDD" id="cd02037">
    <property type="entry name" value="Mrp_NBP35"/>
    <property type="match status" value="1"/>
</dbReference>
<dbReference type="FunFam" id="3.40.50.300:FF:002132">
    <property type="entry name" value="Cytosolic Fe-S cluster assembly factor CFD1"/>
    <property type="match status" value="1"/>
</dbReference>
<dbReference type="Gene3D" id="3.40.50.300">
    <property type="entry name" value="P-loop containing nucleotide triphosphate hydrolases"/>
    <property type="match status" value="1"/>
</dbReference>
<dbReference type="HAMAP" id="MF_02040">
    <property type="entry name" value="Mrp_NBP35"/>
    <property type="match status" value="1"/>
</dbReference>
<dbReference type="HAMAP" id="MF_03039">
    <property type="entry name" value="NUBP2"/>
    <property type="match status" value="1"/>
</dbReference>
<dbReference type="InterPro" id="IPR000808">
    <property type="entry name" value="Mrp-like_CS"/>
</dbReference>
<dbReference type="InterPro" id="IPR019591">
    <property type="entry name" value="Mrp/NBP35_ATP-bd"/>
</dbReference>
<dbReference type="InterPro" id="IPR028600">
    <property type="entry name" value="NUBP2/Cfd1_eukaryotes"/>
</dbReference>
<dbReference type="InterPro" id="IPR027417">
    <property type="entry name" value="P-loop_NTPase"/>
</dbReference>
<dbReference type="InterPro" id="IPR033756">
    <property type="entry name" value="YlxH/NBP35"/>
</dbReference>
<dbReference type="PANTHER" id="PTHR23264:SF19">
    <property type="entry name" value="CYTOSOLIC FE-S CLUSTER ASSEMBLY FACTOR NUBP2"/>
    <property type="match status" value="1"/>
</dbReference>
<dbReference type="PANTHER" id="PTHR23264">
    <property type="entry name" value="NUCLEOTIDE-BINDING PROTEIN NBP35 YEAST -RELATED"/>
    <property type="match status" value="1"/>
</dbReference>
<dbReference type="Pfam" id="PF10609">
    <property type="entry name" value="ParA"/>
    <property type="match status" value="1"/>
</dbReference>
<dbReference type="SUPFAM" id="SSF52540">
    <property type="entry name" value="P-loop containing nucleoside triphosphate hydrolases"/>
    <property type="match status" value="1"/>
</dbReference>
<dbReference type="PROSITE" id="PS01215">
    <property type="entry name" value="MRP"/>
    <property type="match status" value="1"/>
</dbReference>
<reference key="1">
    <citation type="journal article" date="2005" name="Science">
        <title>The genome of the basidiomycetous yeast and human pathogen Cryptococcus neoformans.</title>
        <authorList>
            <person name="Loftus B.J."/>
            <person name="Fung E."/>
            <person name="Roncaglia P."/>
            <person name="Rowley D."/>
            <person name="Amedeo P."/>
            <person name="Bruno D."/>
            <person name="Vamathevan J."/>
            <person name="Miranda M."/>
            <person name="Anderson I.J."/>
            <person name="Fraser J.A."/>
            <person name="Allen J.E."/>
            <person name="Bosdet I.E."/>
            <person name="Brent M.R."/>
            <person name="Chiu R."/>
            <person name="Doering T.L."/>
            <person name="Donlin M.J."/>
            <person name="D'Souza C.A."/>
            <person name="Fox D.S."/>
            <person name="Grinberg V."/>
            <person name="Fu J."/>
            <person name="Fukushima M."/>
            <person name="Haas B.J."/>
            <person name="Huang J.C."/>
            <person name="Janbon G."/>
            <person name="Jones S.J.M."/>
            <person name="Koo H.L."/>
            <person name="Krzywinski M.I."/>
            <person name="Kwon-Chung K.J."/>
            <person name="Lengeler K.B."/>
            <person name="Maiti R."/>
            <person name="Marra M.A."/>
            <person name="Marra R.E."/>
            <person name="Mathewson C.A."/>
            <person name="Mitchell T.G."/>
            <person name="Pertea M."/>
            <person name="Riggs F.R."/>
            <person name="Salzberg S.L."/>
            <person name="Schein J.E."/>
            <person name="Shvartsbeyn A."/>
            <person name="Shin H."/>
            <person name="Shumway M."/>
            <person name="Specht C.A."/>
            <person name="Suh B.B."/>
            <person name="Tenney A."/>
            <person name="Utterback T.R."/>
            <person name="Wickes B.L."/>
            <person name="Wortman J.R."/>
            <person name="Wye N.H."/>
            <person name="Kronstad J.W."/>
            <person name="Lodge J.K."/>
            <person name="Heitman J."/>
            <person name="Davis R.W."/>
            <person name="Fraser C.M."/>
            <person name="Hyman R.W."/>
        </authorList>
    </citation>
    <scope>NUCLEOTIDE SEQUENCE [LARGE SCALE GENOMIC DNA]</scope>
    <source>
        <strain>B-3501A</strain>
    </source>
</reference>
<organism>
    <name type="scientific">Cryptococcus neoformans var. neoformans serotype D (strain B-3501A)</name>
    <name type="common">Filobasidiella neoformans</name>
    <dbReference type="NCBI Taxonomy" id="283643"/>
    <lineage>
        <taxon>Eukaryota</taxon>
        <taxon>Fungi</taxon>
        <taxon>Dikarya</taxon>
        <taxon>Basidiomycota</taxon>
        <taxon>Agaricomycotina</taxon>
        <taxon>Tremellomycetes</taxon>
        <taxon>Tremellales</taxon>
        <taxon>Cryptococcaceae</taxon>
        <taxon>Cryptococcus</taxon>
        <taxon>Cryptococcus neoformans species complex</taxon>
    </lineage>
</organism>
<gene>
    <name evidence="1" type="primary">CFD1</name>
    <name type="ordered locus">CNBA0700</name>
</gene>
<accession>P0CO91</accession>
<accession>Q561C3</accession>
<accession>Q5KQ24</accession>
<protein>
    <recommendedName>
        <fullName evidence="1">Cytosolic Fe-S cluster assembly factor CFD1</fullName>
    </recommendedName>
    <alternativeName>
        <fullName evidence="1">Cytosolic Fe-S cluster-deficient protein 1</fullName>
    </alternativeName>
</protein>
<feature type="chain" id="PRO_0000410152" description="Cytosolic Fe-S cluster assembly factor CFD1">
    <location>
        <begin position="1"/>
        <end position="331"/>
    </location>
</feature>
<feature type="binding site" evidence="1">
    <location>
        <begin position="25"/>
        <end position="32"/>
    </location>
    <ligand>
        <name>ATP</name>
        <dbReference type="ChEBI" id="CHEBI:30616"/>
    </ligand>
</feature>
<feature type="binding site" evidence="1">
    <location>
        <position position="211"/>
    </location>
    <ligand>
        <name>[4Fe-4S] cluster</name>
        <dbReference type="ChEBI" id="CHEBI:49883"/>
        <note>ligand shared between dimeric partners</note>
    </ligand>
</feature>
<feature type="binding site" evidence="1">
    <location>
        <position position="214"/>
    </location>
    <ligand>
        <name>[4Fe-4S] cluster</name>
        <dbReference type="ChEBI" id="CHEBI:49883"/>
        <note>ligand shared between dimeric partners</note>
    </ligand>
</feature>
<keyword id="KW-0004">4Fe-4S</keyword>
<keyword id="KW-0067">ATP-binding</keyword>
<keyword id="KW-0963">Cytoplasm</keyword>
<keyword id="KW-0408">Iron</keyword>
<keyword id="KW-0411">Iron-sulfur</keyword>
<keyword id="KW-0479">Metal-binding</keyword>
<keyword id="KW-0547">Nucleotide-binding</keyword>
<comment type="function">
    <text evidence="1">Component of the cytosolic iron-sulfur (Fe/S) protein assembly (CIA) machinery. Required for maturation of extramitochondrial Fe-S proteins. The NBP35-CFD1 heterotetramer forms a Fe-S scaffold complex, mediating the de novo assembly of an Fe-S cluster and its transfer to target apoproteins.</text>
</comment>
<comment type="cofactor">
    <cofactor evidence="1">
        <name>[4Fe-4S] cluster</name>
        <dbReference type="ChEBI" id="CHEBI:49883"/>
    </cofactor>
    <text evidence="1">Binds 4 [4Fe-4S] clusters per heterotetramer. Contains two stable clusters in the N-termini of NBP35 and two labile, bridging clusters between subunits of the NBP35-CFD1 heterotetramer.</text>
</comment>
<comment type="subunit">
    <text evidence="1">Heterotetramer of 2 NBP35 and 2 CFD1 chains.</text>
</comment>
<comment type="subcellular location">
    <subcellularLocation>
        <location evidence="1">Cytoplasm</location>
    </subcellularLocation>
</comment>
<comment type="similarity">
    <text evidence="1">Belongs to the Mrp/NBP35 ATP-binding proteins family. NUBP2/CFD1 subfamily.</text>
</comment>
<sequence>MADIIETPVSRRLSTVKNIIIVLSGKGGVGKSSSSVQLALSLLAQSPTNRVGLIDLDITGPSLPRMVGLDTPTATVHQSSAGWVPVYVDQGRRLGVMSIGFLLKDRGDSVVWRGPKKDGMIRQFLSEVRWGDLDYLVIDTPPGTSDEHISLLTHLHPLFTPTMSNATTPTSILISTPQTTALNDTLKSLSFTRKLSLPVMGLVENMAGYVCPCCGEISDTFGKGGGEAMAHKEGVGFLGRVPIDTVLVSLLDAVSKGEVLGEGAVEHTSDEAAEGQTNGSTEHFPLLDKYLETTSSKVWKDITQKLVDKIEQHKSDIRARLESSSETLAIA</sequence>
<proteinExistence type="inferred from homology"/>